<reference evidence="16" key="1">
    <citation type="submission" date="2006-09" db="EMBL/GenBank/DDBJ databases">
        <title>Characterization of a family of aspartic proteases and identification of a novel compartment of the secretory pathway in Toxoplasma gondii.</title>
        <authorList>
            <person name="Shea M.W."/>
            <person name="Jakle U."/>
            <person name="Berry C."/>
            <person name="Joiner K."/>
            <person name="Soldati D."/>
        </authorList>
    </citation>
    <scope>NUCLEOTIDE SEQUENCE [MRNA]</scope>
</reference>
<reference evidence="11" key="2">
    <citation type="journal article" date="2015" name="Elife">
        <title>An aspartyl protease defines a novel pathway for export of Toxoplasma proteins into the host cell.</title>
        <authorList>
            <person name="Coffey M.J."/>
            <person name="Sleebs B.E."/>
            <person name="Uboldi A.D."/>
            <person name="Garnham A."/>
            <person name="Franco M."/>
            <person name="Marino N.D."/>
            <person name="Panas M.W."/>
            <person name="Ferguson D.J."/>
            <person name="Enciso M."/>
            <person name="O'Neill M.T."/>
            <person name="Lopaticki S."/>
            <person name="Stewart R.J."/>
            <person name="Dewson G."/>
            <person name="Smyth G.K."/>
            <person name="Smith B.J."/>
            <person name="Masters S.L."/>
            <person name="Boothroyd J.C."/>
            <person name="Boddey J.A."/>
            <person name="Tonkin C.J."/>
        </authorList>
    </citation>
    <scope>FUNCTION</scope>
    <scope>CATALYTIC ACTIVITY</scope>
    <scope>BIOPHYSICOCHEMICAL PROPERTIES</scope>
    <scope>SUBCELLULAR LOCATION</scope>
    <scope>DEVELOPMENTAL STAGE</scope>
    <scope>PROTEOLYTIC CLEAVAGE</scope>
    <scope>DISRUPTION PHENOTYPE</scope>
    <scope>ACTIVE SITE</scope>
    <scope>MUTAGENESIS OF ASP-431 AND ASP-682</scope>
    <source>
        <strain evidence="8">RH</strain>
    </source>
</reference>
<reference evidence="11" key="3">
    <citation type="journal article" date="2015" name="PLoS Pathog.">
        <title>Fundamental Roles of the Golgi-Associated Toxoplasma Aspartyl Protease, ASP5, at the Host-Parasite Interface.</title>
        <authorList>
            <person name="Hammoudi P.M."/>
            <person name="Jacot D."/>
            <person name="Mueller C."/>
            <person name="Di Cristina M."/>
            <person name="Dogga S.K."/>
            <person name="Marq J.B."/>
            <person name="Romano J."/>
            <person name="Tosetti N."/>
            <person name="Dubrot J."/>
            <person name="Emre Y."/>
            <person name="Lunghi M."/>
            <person name="Coppens I."/>
            <person name="Yamamoto M."/>
            <person name="Sojka D."/>
            <person name="Pino P."/>
            <person name="Soldati-Favre D."/>
        </authorList>
    </citation>
    <scope>FUNCTION</scope>
    <scope>CATALYTIC ACTIVITY</scope>
    <scope>SUBCELLULAR LOCATION</scope>
    <scope>DEVELOPMENTAL STAGE</scope>
    <scope>DISRUPTION PHENOTYPE</scope>
    <scope>MUTAGENESIS OF ASP-431</scope>
    <source>
        <strain evidence="7">Prugniaud</strain>
        <strain evidence="7">RH</strain>
    </source>
</reference>
<reference evidence="11" key="4">
    <citation type="journal article" date="2016" name="Cell. Microbiol.">
        <title>The aspartyl protease TgASP5 mediates the export of the Toxoplasma GRA16 and GRA24 effectors into host cells.</title>
        <authorList>
            <person name="Curt-Varesano A."/>
            <person name="Braun L."/>
            <person name="Ranquet C."/>
            <person name="Hakimi M.A."/>
            <person name="Bougdour A."/>
        </authorList>
    </citation>
    <scope>FUNCTION</scope>
    <scope>CATALYTIC ACTIVITY</scope>
    <scope>DISRUPTION PHENOTYPE</scope>
</reference>
<reference evidence="11" key="5">
    <citation type="journal article" date="2018" name="MBio">
        <title>Aspartyl Protease 5 Matures Dense Granule Proteins That Reside at the Host-Parasite Interface in Toxoplasma gondii.</title>
        <authorList>
            <person name="Coffey M.J."/>
            <person name="Dagley L.F."/>
            <person name="Seizova S."/>
            <person name="Kapp E.A."/>
            <person name="Infusini G."/>
            <person name="Roos D.S."/>
            <person name="Boddey J.A."/>
            <person name="Webb A.I."/>
            <person name="Tonkin C.J."/>
        </authorList>
    </citation>
    <scope>FUNCTION</scope>
    <scope>CATALYTIC ACTIVITY</scope>
    <scope>DISRUPTION PHENOTYPE</scope>
    <source>
        <strain evidence="9">Prugniaud</strain>
    </source>
</reference>
<feature type="signal peptide" evidence="1">
    <location>
        <begin position="1"/>
        <end position="22"/>
    </location>
</feature>
<feature type="chain" id="PRO_0000456826" description="Aspartic protease 5" evidence="1">
    <location>
        <begin position="23"/>
        <end position="969"/>
    </location>
</feature>
<feature type="topological domain" description="Lumenal" evidence="11">
    <location>
        <begin position="23"/>
        <end position="820"/>
    </location>
</feature>
<feature type="transmembrane region" description="Helical" evidence="1">
    <location>
        <begin position="821"/>
        <end position="841"/>
    </location>
</feature>
<feature type="topological domain" description="Cytoplasmic" evidence="11">
    <location>
        <begin position="842"/>
        <end position="969"/>
    </location>
</feature>
<feature type="domain" description="Peptidase A1" evidence="2">
    <location>
        <begin position="413"/>
        <end position="758"/>
    </location>
</feature>
<feature type="region of interest" description="Disordered" evidence="5">
    <location>
        <begin position="1"/>
        <end position="65"/>
    </location>
</feature>
<feature type="region of interest" description="Disordered" evidence="5">
    <location>
        <begin position="79"/>
        <end position="104"/>
    </location>
</feature>
<feature type="region of interest" description="Disordered" evidence="5">
    <location>
        <begin position="128"/>
        <end position="149"/>
    </location>
</feature>
<feature type="region of interest" description="Disordered" evidence="5">
    <location>
        <begin position="173"/>
        <end position="193"/>
    </location>
</feature>
<feature type="region of interest" description="Disordered" evidence="5">
    <location>
        <begin position="311"/>
        <end position="382"/>
    </location>
</feature>
<feature type="region of interest" description="Disordered" evidence="5">
    <location>
        <begin position="608"/>
        <end position="635"/>
    </location>
</feature>
<feature type="region of interest" description="Disordered" evidence="5">
    <location>
        <begin position="768"/>
        <end position="794"/>
    </location>
</feature>
<feature type="region of interest" description="Disordered" evidence="5">
    <location>
        <begin position="922"/>
        <end position="969"/>
    </location>
</feature>
<feature type="compositionally biased region" description="Low complexity" evidence="5">
    <location>
        <begin position="1"/>
        <end position="45"/>
    </location>
</feature>
<feature type="compositionally biased region" description="Low complexity" evidence="5">
    <location>
        <begin position="311"/>
        <end position="324"/>
    </location>
</feature>
<feature type="compositionally biased region" description="Basic and acidic residues" evidence="5">
    <location>
        <begin position="335"/>
        <end position="355"/>
    </location>
</feature>
<feature type="compositionally biased region" description="Basic and acidic residues" evidence="5">
    <location>
        <begin position="769"/>
        <end position="781"/>
    </location>
</feature>
<feature type="compositionally biased region" description="Polar residues" evidence="5">
    <location>
        <begin position="952"/>
        <end position="961"/>
    </location>
</feature>
<feature type="active site" evidence="3 14">
    <location>
        <position position="431"/>
    </location>
</feature>
<feature type="active site" evidence="14">
    <location>
        <position position="682"/>
    </location>
</feature>
<feature type="mutagenesis site" description="Tachyzoide lytic cycle is partially impaired. Loss of catalytic activity. Loss of auto-processing. No effect on subcellular localization; when associated with A-682." evidence="7 8">
    <original>D</original>
    <variation>A</variation>
    <location>
        <position position="431"/>
    </location>
</feature>
<feature type="mutagenesis site" description="Loss of catalytic activity. Loss of auto-processing. No effect on subcellular localization; when associated with A-431." evidence="8">
    <original>D</original>
    <variation>A</variation>
    <location>
        <position position="682"/>
    </location>
</feature>
<keyword id="KW-0064">Aspartyl protease</keyword>
<keyword id="KW-0333">Golgi apparatus</keyword>
<keyword id="KW-0378">Hydrolase</keyword>
<keyword id="KW-0472">Membrane</keyword>
<keyword id="KW-0645">Protease</keyword>
<keyword id="KW-0732">Signal</keyword>
<keyword id="KW-0812">Transmembrane</keyword>
<keyword id="KW-1133">Transmembrane helix</keyword>
<name>ASP5_TOXGO</name>
<gene>
    <name evidence="10" type="primary">ASP5</name>
</gene>
<sequence>MEAGAMGGSSFLSFSSGPSAETSPSSLSPPTSSSPSPSPQLVSDSVESLHAKRPLAQSSRSSSRTAASTCFCWQGEGQENEAAPTISQEERRGGSMTAASAGHLETAREEAARCLGCSYTGEERRGASSATSVLSLGGERGRPPSRSSSLWTFSGLLSPLAFRSRRCCPQFSSSSSPLSPLPHPRGAPASACGSAVITDRAGRPASPLSFSRLASPVSDPSGVCPPRVVAARVWRLLSSVLFSLVNCARLFPRRLSRRPDPLRKPRAQVWSASSRSLQALLLATVALFAACSSLHGSSLLGAQAASPTPPFLSLSSSPRSLASDSAKKGSNAPEQSREQRGEREGERQRPDKGEENGETEETFPAASGVVPAPGLKVADLPRTGPPVDLLGLPIRKKVFRARLYGSMFSYAYYFLDILVGTPPQRASVILDTGSSLLAFPCAGCSECGQHLDPAMDTSRSATGEWIDCKEQERCFGSCSGGTPLGGLGGGGVSSMRRCMYTQTYSEGSAIRGIYFSDVVALGEVEQKNPPVRYDFVGCHTQETNLFVTQKAAGIFGISFPKGHRQPTLLDVMFGHTNLVDKKMFSVCISEDGGLLTVGGYEPTLLVAPPESESTPATEALRPVAGESASRRISEKTSPHHAALLTWTSIISHSTYRVPLSGMEVEGLVLGSGVDDFGNTMVDSGTDLSSIFPPIKVSFGDEKNSQVWWWPEGYLYRRTGGYFCDGLDDNKVSASVLGLSFFKNKQVLFDREQDRVGFAAAKCPSFFLDQRPRGPDSGDGPKGRPTAPFTVPPLRVPVPMDGGGVPGDAKQPEGLPLSPQQLWVAAALVVVAILIAVTVILLHTIKRPSRSSAVVPAPSAPRLPFAQNSKSAGRFARGLGHGALGVGNPVYVQRTQRYREVQEAQPHTADAYYDVEEDRFTGEDDGDFFGDDSVPSAEEQETAPSLSLREESSPFSASQSTLLDLPLGGE</sequence>
<dbReference type="EC" id="3.4.23.-" evidence="8 12 13 15"/>
<dbReference type="EMBL" id="EF031150">
    <property type="protein sequence ID" value="ABK31936.1"/>
    <property type="molecule type" value="mRNA"/>
</dbReference>
<dbReference type="SMR" id="A0MQA3"/>
<dbReference type="MEROPS" id="A01.098"/>
<dbReference type="VEuPathDB" id="ToxoDB:TGARI_242720"/>
<dbReference type="VEuPathDB" id="ToxoDB:TGCAST_242720B"/>
<dbReference type="VEuPathDB" id="ToxoDB:TGCOUG_242720B"/>
<dbReference type="VEuPathDB" id="ToxoDB:TGDOM2_242720A"/>
<dbReference type="VEuPathDB" id="ToxoDB:TGDOM2_242720B"/>
<dbReference type="VEuPathDB" id="ToxoDB:TGFOU_242720B"/>
<dbReference type="VEuPathDB" id="ToxoDB:TGGT1_242720"/>
<dbReference type="VEuPathDB" id="ToxoDB:TGMAS_242720A"/>
<dbReference type="VEuPathDB" id="ToxoDB:TGMAS_242720B"/>
<dbReference type="VEuPathDB" id="ToxoDB:TGME49_242720"/>
<dbReference type="VEuPathDB" id="ToxoDB:TGP89_242720"/>
<dbReference type="VEuPathDB" id="ToxoDB:TGPRC2_242720A"/>
<dbReference type="VEuPathDB" id="ToxoDB:TGPRC2_242720B"/>
<dbReference type="VEuPathDB" id="ToxoDB:TGRH88_029500"/>
<dbReference type="VEuPathDB" id="ToxoDB:TGRUB_242720"/>
<dbReference type="VEuPathDB" id="ToxoDB:TGVAND_242720"/>
<dbReference type="VEuPathDB" id="ToxoDB:TGVEG_242720"/>
<dbReference type="GO" id="GO:0000139">
    <property type="term" value="C:Golgi membrane"/>
    <property type="evidence" value="ECO:0007669"/>
    <property type="project" value="UniProtKB-SubCell"/>
</dbReference>
<dbReference type="GO" id="GO:0004190">
    <property type="term" value="F:aspartic-type endopeptidase activity"/>
    <property type="evidence" value="ECO:0007669"/>
    <property type="project" value="UniProtKB-KW"/>
</dbReference>
<dbReference type="GO" id="GO:0006508">
    <property type="term" value="P:proteolysis"/>
    <property type="evidence" value="ECO:0007669"/>
    <property type="project" value="UniProtKB-KW"/>
</dbReference>
<dbReference type="Gene3D" id="2.40.70.10">
    <property type="entry name" value="Acid Proteases"/>
    <property type="match status" value="2"/>
</dbReference>
<dbReference type="InterPro" id="IPR001461">
    <property type="entry name" value="Aspartic_peptidase_A1"/>
</dbReference>
<dbReference type="InterPro" id="IPR001969">
    <property type="entry name" value="Aspartic_peptidase_AS"/>
</dbReference>
<dbReference type="InterPro" id="IPR033121">
    <property type="entry name" value="PEPTIDASE_A1"/>
</dbReference>
<dbReference type="InterPro" id="IPR021109">
    <property type="entry name" value="Peptidase_aspartic_dom_sf"/>
</dbReference>
<dbReference type="InterPro" id="IPR032799">
    <property type="entry name" value="TAXi_C"/>
</dbReference>
<dbReference type="InterPro" id="IPR032861">
    <property type="entry name" value="TAXi_N"/>
</dbReference>
<dbReference type="PANTHER" id="PTHR13683">
    <property type="entry name" value="ASPARTYL PROTEASES"/>
    <property type="match status" value="1"/>
</dbReference>
<dbReference type="PANTHER" id="PTHR13683:SF375">
    <property type="entry name" value="PEPTIDASE A1 DOMAIN-CONTAINING PROTEIN"/>
    <property type="match status" value="1"/>
</dbReference>
<dbReference type="Pfam" id="PF14541">
    <property type="entry name" value="TAXi_C"/>
    <property type="match status" value="1"/>
</dbReference>
<dbReference type="Pfam" id="PF14543">
    <property type="entry name" value="TAXi_N"/>
    <property type="match status" value="1"/>
</dbReference>
<dbReference type="PRINTS" id="PR00792">
    <property type="entry name" value="PEPSIN"/>
</dbReference>
<dbReference type="SUPFAM" id="SSF50630">
    <property type="entry name" value="Acid proteases"/>
    <property type="match status" value="1"/>
</dbReference>
<dbReference type="PROSITE" id="PS00141">
    <property type="entry name" value="ASP_PROTEASE"/>
    <property type="match status" value="1"/>
</dbReference>
<dbReference type="PROSITE" id="PS51767">
    <property type="entry name" value="PEPTIDASE_A1"/>
    <property type="match status" value="1"/>
</dbReference>
<comment type="function">
    <text evidence="6 7 8 9">In tachyzoites, plays an essential role in the export of several dense granule proteins into the host cell by cleaving the localization motif RRLxx (termed Toxoplasma export element (TEXEL)) located downstream of the N-terminal secretory signal sequence (PubMed:26270241, PubMed:26473595, PubMed:26576949, PubMed:30377279). However, can also regulate the export of proteins that lack the TEXEL motif, such as GRA24 (PubMed:26270241, PubMed:26473595, PubMed:26576949). Requires Arg at P3 and P2, and Leu at P1 in the substrate TEXEL motif and, specifically, cleaves after Leu (PubMed:26576949). Cleaves GRA16; proteolytic cleavage is essential for the correct trafficking of GRA16 from the parasite into the infected host nucleus (PubMed:26270241, PubMed:26473595, PubMed:26576949). Cleaves GRA19 and GRA20 (PubMed:26473595). Cleaves MYR1 (PubMed:26576949). Cleaves LCAT, GRA44, GRA46, GRA46, ROP35/WNG1 and ROP34/WNG2 (PubMed:30377279). By regulating the export of dense granule proteins into the host cell, regulates multiple processes during tachyzoite infection of host cells, including recruitment of host mitochondria to the parasitophorous vacuole (PV), formation of the nanotubular network (NTN) or intravacuolar network (IVN) which are membranous tubules that bud from the PV membrane into the vacuolar lumen and, up-regulation of host cell genes to facilitate the parasite infection and modulate the host innate immune response (PubMed:26473595, PubMed:26576949). At the bradyzoite stage, also involved in the formation of the cyst wall (PubMed:26473595).</text>
</comment>
<comment type="biophysicochemical properties">
    <phDependence>
        <text evidence="8">Optimum pH is 5.5.</text>
    </phDependence>
</comment>
<comment type="subcellular location">
    <subcellularLocation>
        <location evidence="7 8">Golgi apparatus membrane</location>
        <topology evidence="11">Single-pass type I membrane protein</topology>
    </subcellularLocation>
</comment>
<comment type="developmental stage">
    <text evidence="7 8">Expressed in tachyzoites (at protein level).</text>
</comment>
<comment type="PTM">
    <text evidence="8">May be auto-cleaved to produce a 55 kDa form.</text>
</comment>
<comment type="disruption phenotype">
    <text evidence="6 7 8 9">Knockout in type I (RH strain) or type II (Prugniaud strain) parasites, results in a reduction in tachyzoite growth; the lytic cycle is slower with some defects in spontaneous egress while intracellular replication in the host cell is normal (PubMed:26473595, PubMed:26576949). In tachyzoite infected host cells, association of host mitochondria (HMA) with the parasitophorous vacuole membrane (PVM) is reduced; however, does not affect processing and expression levels of MAF1, which is required for HMA (PubMed:26473595, PubMed:26576949). Up-regulation of several host cell genes induced during infection is reduced (PubMed:26473595, PubMed:26576949). Host MYC expression within the host nuclei is severely reduced (PubMed:26576949). The nanotubular network (NTN) or intravacuolar network (IVN) which are membranous tubules that bud from the PV membrane into the vacuolar lumen are diminished and disorganized (PubMed:26473595, PubMed:26576949). During infection, fails to enhance dendritic cell migration (PubMed:26473595). Parasite virulence is less severe in C57/BL6 mice (PubMed:26473595, PubMed:26576949). Loss of GRA16 processing (PubMed:26270241, PubMed:26473595, PubMed:26576949). Export of GRA16 to the host nucleus is impaired with GRA16 remaining in the Golgi and the PV (PubMed:26270241, PubMed:26473595, PubMed:26576949). Loss of MYR1 processing (PubMed:26576949). Export of GRA24 to the host nucleus is impaired (PubMed:26270241, PubMed:26473595, PubMed:26576949). GRA2, GRA3 and GRA7, but not GRA1, localization to the PVM is impaired; however, their secretion into the PV is normal (PubMed:26473595). Loss of GRA19 and GRA20 processing without affecting their localization to the PVM (PubMed:26473595). Loss of LCAT, GRA44, GRA46, GRA46, ROP35/WNG1 and ROP34/WNG2 processing (PubMed:30377279). In type II parasite (Prugniaud strain), stage conversion from tachyzoites to bradyzoites is normal; however, cyst wall formation is impaired (PubMed:26473595). At the tachyzoite stage, does not affect the recruitment of host immunity related GTPases (IRG proteins) Tgtp1/Irgb6 to the PVM (PubMed:26473595).</text>
</comment>
<comment type="similarity">
    <text evidence="4">Belongs to the peptidase A1 family.</text>
</comment>
<comment type="caution">
    <text evidence="7 8">The origin of a shorter ASP5 form with an apparent molecular weight of 55 kDa is unclear (PubMed:26473595, PubMed:26576949). One study suggests that it is a processed form of the full length protein (PubMed:26576949). However, another study suggests that it originate from a splicing event (PubMed:26473595).</text>
</comment>
<accession>A0MQA3</accession>
<evidence type="ECO:0000255" key="1"/>
<evidence type="ECO:0000255" key="2">
    <source>
        <dbReference type="PROSITE-ProRule" id="PRU01103"/>
    </source>
</evidence>
<evidence type="ECO:0000255" key="3">
    <source>
        <dbReference type="PROSITE-ProRule" id="PRU10094"/>
    </source>
</evidence>
<evidence type="ECO:0000255" key="4">
    <source>
        <dbReference type="RuleBase" id="RU000454"/>
    </source>
</evidence>
<evidence type="ECO:0000256" key="5">
    <source>
        <dbReference type="SAM" id="MobiDB-lite"/>
    </source>
</evidence>
<evidence type="ECO:0000269" key="6">
    <source>
    </source>
</evidence>
<evidence type="ECO:0000269" key="7">
    <source>
    </source>
</evidence>
<evidence type="ECO:0000269" key="8">
    <source>
    </source>
</evidence>
<evidence type="ECO:0000269" key="9">
    <source>
    </source>
</evidence>
<evidence type="ECO:0000303" key="10">
    <source>
    </source>
</evidence>
<evidence type="ECO:0000305" key="11"/>
<evidence type="ECO:0000305" key="12">
    <source>
    </source>
</evidence>
<evidence type="ECO:0000305" key="13">
    <source>
    </source>
</evidence>
<evidence type="ECO:0000305" key="14">
    <source>
    </source>
</evidence>
<evidence type="ECO:0000305" key="15">
    <source>
    </source>
</evidence>
<evidence type="ECO:0000312" key="16">
    <source>
        <dbReference type="EMBL" id="ABK31936.1"/>
    </source>
</evidence>
<protein>
    <recommendedName>
        <fullName evidence="10">Aspartic protease 5</fullName>
        <ecNumber evidence="8 12 13 15">3.4.23.-</ecNumber>
    </recommendedName>
</protein>
<proteinExistence type="evidence at protein level"/>
<organism evidence="16">
    <name type="scientific">Toxoplasma gondii</name>
    <dbReference type="NCBI Taxonomy" id="5811"/>
    <lineage>
        <taxon>Eukaryota</taxon>
        <taxon>Sar</taxon>
        <taxon>Alveolata</taxon>
        <taxon>Apicomplexa</taxon>
        <taxon>Conoidasida</taxon>
        <taxon>Coccidia</taxon>
        <taxon>Eucoccidiorida</taxon>
        <taxon>Eimeriorina</taxon>
        <taxon>Sarcocystidae</taxon>
        <taxon>Toxoplasma</taxon>
    </lineage>
</organism>